<protein>
    <recommendedName>
        <fullName evidence="5 6">Odorant-binding protein 47</fullName>
        <shortName evidence="6">AgamOBP47</shortName>
    </recommendedName>
    <alternativeName>
        <fullName evidence="4">AgamOBPjj2</fullName>
    </alternativeName>
    <alternativeName>
        <fullName evidence="8">Odorant-binding protein OBPjj2</fullName>
    </alternativeName>
</protein>
<gene>
    <name evidence="9" type="primary">OBP47</name>
    <name evidence="8" type="synonym">OBPjj2</name>
    <name evidence="9" type="ORF">AgaP_AGAP007287</name>
</gene>
<accession>Q7PF80</accession>
<accession>Q706F2</accession>
<comment type="function">
    <text evidence="2 5 7">Present in the aqueous fluid surrounding olfactory sensory dendrites and are thought to aid in the capture and transport of hydrophobic odorants into and through this fluid (Probable). Binds N-phenyl-1-naphthylamine, menthol, citronellal, 1-dodecanol, decanal, p-tert-butylbenzophenone, 4-hydroxy-4'-isopropylazobenzene, 2-pyrrolyl-p-methyl-azobenzene and indole (PubMed:20957509). Expressed in mosquito head but barely detectable in antennae, which suggests that it may be present in mouth structures, such as palpi and proboscis, and may have a function in taste (PubMed:20957509).</text>
</comment>
<comment type="subcellular location">
    <subcellularLocation>
        <location evidence="7">Secreted</location>
    </subcellularLocation>
</comment>
<comment type="tissue specificity">
    <text evidence="2">Head without antennae (at protein level).</text>
</comment>
<comment type="PTM">
    <text evidence="2">Glycosylated.</text>
</comment>
<comment type="similarity">
    <text evidence="7">Belongs to the PBP/GOBP family.</text>
</comment>
<dbReference type="EMBL" id="AJ618918">
    <property type="protein sequence ID" value="CAF01997.1"/>
    <property type="molecule type" value="mRNA"/>
</dbReference>
<dbReference type="EMBL" id="AAAB01008807">
    <property type="protein sequence ID" value="EAA45425.3"/>
    <property type="molecule type" value="Genomic_DNA"/>
</dbReference>
<dbReference type="RefSeq" id="XP_308532.3">
    <property type="nucleotide sequence ID" value="XM_308532.3"/>
</dbReference>
<dbReference type="PDB" id="3PM2">
    <property type="method" value="X-ray"/>
    <property type="resolution" value="1.80 A"/>
    <property type="chains" value="A=58-228"/>
</dbReference>
<dbReference type="PDBsum" id="3PM2"/>
<dbReference type="SMR" id="Q7PF80"/>
<dbReference type="FunCoup" id="Q7PF80">
    <property type="interactions" value="42"/>
</dbReference>
<dbReference type="STRING" id="7165.Q7PF80"/>
<dbReference type="PaxDb" id="7165-AGAP007287-PA"/>
<dbReference type="EnsemblMetazoa" id="AGAP007287-RA">
    <property type="protein sequence ID" value="AGAP007287-PA"/>
    <property type="gene ID" value="AGAP007287"/>
</dbReference>
<dbReference type="GeneID" id="1269878"/>
<dbReference type="KEGG" id="aga:1269878"/>
<dbReference type="VEuPathDB" id="VectorBase:AGAP007287"/>
<dbReference type="eggNOG" id="ENOG502T83Z">
    <property type="taxonomic scope" value="Eukaryota"/>
</dbReference>
<dbReference type="HOGENOM" id="CLU_120152_0_0_1"/>
<dbReference type="OMA" id="CVADCAM"/>
<dbReference type="Proteomes" id="UP000007062">
    <property type="component" value="Chromosome 2L"/>
</dbReference>
<dbReference type="GO" id="GO:0005576">
    <property type="term" value="C:extracellular region"/>
    <property type="evidence" value="ECO:0007669"/>
    <property type="project" value="UniProtKB-SubCell"/>
</dbReference>
<dbReference type="GO" id="GO:0005549">
    <property type="term" value="F:odorant binding"/>
    <property type="evidence" value="ECO:0007669"/>
    <property type="project" value="InterPro"/>
</dbReference>
<dbReference type="GO" id="GO:0007608">
    <property type="term" value="P:sensory perception of smell"/>
    <property type="evidence" value="ECO:0007669"/>
    <property type="project" value="UniProtKB-KW"/>
</dbReference>
<dbReference type="Gene3D" id="1.10.238.270">
    <property type="match status" value="1"/>
</dbReference>
<dbReference type="InterPro" id="IPR054577">
    <property type="entry name" value="OBP47-like_dom"/>
</dbReference>
<dbReference type="InterPro" id="IPR052295">
    <property type="entry name" value="Odorant-binding_protein"/>
</dbReference>
<dbReference type="InterPro" id="IPR036728">
    <property type="entry name" value="PBP_GOBP_sf"/>
</dbReference>
<dbReference type="PANTHER" id="PTHR21066:SF3">
    <property type="entry name" value="IP02236P"/>
    <property type="match status" value="1"/>
</dbReference>
<dbReference type="PANTHER" id="PTHR21066">
    <property type="entry name" value="ODORANT-BINDING PROTEIN 59A-RELATED"/>
    <property type="match status" value="1"/>
</dbReference>
<dbReference type="Pfam" id="PF22651">
    <property type="entry name" value="OBP47_like"/>
    <property type="match status" value="1"/>
</dbReference>
<dbReference type="SUPFAM" id="SSF47565">
    <property type="entry name" value="Insect pheromone/odorant-binding proteins"/>
    <property type="match status" value="1"/>
</dbReference>
<reference evidence="8" key="1">
    <citation type="journal article" date="2004" name="Gene">
        <title>'Plus-C' odorant-binding protein genes in two Drosophila species and the malaria mosquito Anopheles gambiae.</title>
        <authorList>
            <person name="Zhou J.J."/>
            <person name="Huang W."/>
            <person name="Zhang G.A."/>
            <person name="Pickett J.A."/>
            <person name="Field L.M."/>
        </authorList>
    </citation>
    <scope>NUCLEOTIDE SEQUENCE [MRNA]</scope>
</reference>
<reference evidence="10" key="2">
    <citation type="journal article" date="2002" name="Science">
        <title>The genome sequence of the malaria mosquito Anopheles gambiae.</title>
        <authorList>
            <person name="Holt R.A."/>
            <person name="Subramanian G.M."/>
            <person name="Halpern A."/>
            <person name="Sutton G.G."/>
            <person name="Charlab R."/>
            <person name="Nusskern D.R."/>
            <person name="Wincker P."/>
            <person name="Clark A.G."/>
            <person name="Ribeiro J.M.C."/>
            <person name="Wides R."/>
            <person name="Salzberg S.L."/>
            <person name="Loftus B.J."/>
            <person name="Yandell M.D."/>
            <person name="Majoros W.H."/>
            <person name="Rusch D.B."/>
            <person name="Lai Z."/>
            <person name="Kraft C.L."/>
            <person name="Abril J.F."/>
            <person name="Anthouard V."/>
            <person name="Arensburger P."/>
            <person name="Atkinson P.W."/>
            <person name="Baden H."/>
            <person name="de Berardinis V."/>
            <person name="Baldwin D."/>
            <person name="Benes V."/>
            <person name="Biedler J."/>
            <person name="Blass C."/>
            <person name="Bolanos R."/>
            <person name="Boscus D."/>
            <person name="Barnstead M."/>
            <person name="Cai S."/>
            <person name="Center A."/>
            <person name="Chaturverdi K."/>
            <person name="Christophides G.K."/>
            <person name="Chrystal M.A.M."/>
            <person name="Clamp M."/>
            <person name="Cravchik A."/>
            <person name="Curwen V."/>
            <person name="Dana A."/>
            <person name="Delcher A."/>
            <person name="Dew I."/>
            <person name="Evans C.A."/>
            <person name="Flanigan M."/>
            <person name="Grundschober-Freimoser A."/>
            <person name="Friedli L."/>
            <person name="Gu Z."/>
            <person name="Guan P."/>
            <person name="Guigo R."/>
            <person name="Hillenmeyer M.E."/>
            <person name="Hladun S.L."/>
            <person name="Hogan J.R."/>
            <person name="Hong Y.S."/>
            <person name="Hoover J."/>
            <person name="Jaillon O."/>
            <person name="Ke Z."/>
            <person name="Kodira C.D."/>
            <person name="Kokoza E."/>
            <person name="Koutsos A."/>
            <person name="Letunic I."/>
            <person name="Levitsky A.A."/>
            <person name="Liang Y."/>
            <person name="Lin J.-J."/>
            <person name="Lobo N.F."/>
            <person name="Lopez J.R."/>
            <person name="Malek J.A."/>
            <person name="McIntosh T.C."/>
            <person name="Meister S."/>
            <person name="Miller J.R."/>
            <person name="Mobarry C."/>
            <person name="Mongin E."/>
            <person name="Murphy S.D."/>
            <person name="O'Brochta D.A."/>
            <person name="Pfannkoch C."/>
            <person name="Qi R."/>
            <person name="Regier M.A."/>
            <person name="Remington K."/>
            <person name="Shao H."/>
            <person name="Sharakhova M.V."/>
            <person name="Sitter C.D."/>
            <person name="Shetty J."/>
            <person name="Smith T.J."/>
            <person name="Strong R."/>
            <person name="Sun J."/>
            <person name="Thomasova D."/>
            <person name="Ton L.Q."/>
            <person name="Topalis P."/>
            <person name="Tu Z.J."/>
            <person name="Unger M.F."/>
            <person name="Walenz B."/>
            <person name="Wang A.H."/>
            <person name="Wang J."/>
            <person name="Wang M."/>
            <person name="Wang X."/>
            <person name="Woodford K.J."/>
            <person name="Wortman J.R."/>
            <person name="Wu M."/>
            <person name="Yao A."/>
            <person name="Zdobnov E.M."/>
            <person name="Zhang H."/>
            <person name="Zhao Q."/>
            <person name="Zhao S."/>
            <person name="Zhu S.C."/>
            <person name="Zhimulev I."/>
            <person name="Coluzzi M."/>
            <person name="della Torre A."/>
            <person name="Roth C.W."/>
            <person name="Louis C."/>
            <person name="Kalush F."/>
            <person name="Mural R.J."/>
            <person name="Myers E.W."/>
            <person name="Adams M.D."/>
            <person name="Smith H.O."/>
            <person name="Broder S."/>
            <person name="Gardner M.J."/>
            <person name="Fraser C.M."/>
            <person name="Birney E."/>
            <person name="Bork P."/>
            <person name="Brey P.T."/>
            <person name="Venter J.C."/>
            <person name="Weissenbach J."/>
            <person name="Kafatos F.C."/>
            <person name="Collins F.H."/>
            <person name="Hoffman S.L."/>
        </authorList>
    </citation>
    <scope>NUCLEOTIDE SEQUENCE [LARGE SCALE GENOMIC DNA]</scope>
    <source>
        <strain evidence="10">PEST</strain>
    </source>
</reference>
<reference evidence="9" key="3">
    <citation type="journal article" date="2007" name="Genome Biol.">
        <title>Update of the Anopheles gambiae PEST genome assembly.</title>
        <authorList>
            <person name="Sharakhova M.V."/>
            <person name="Hammond M.P."/>
            <person name="Lobo N.F."/>
            <person name="Krzywinski J."/>
            <person name="Unger M.F."/>
            <person name="Hillenmeyer M.E."/>
            <person name="Bruggner R.V."/>
            <person name="Birney E."/>
            <person name="Collins F.H."/>
        </authorList>
    </citation>
    <scope>NUCLEOTIDE SEQUENCE [LARGE SCALE GENOMIC DNA]</scope>
    <source>
        <strain evidence="9">PEST</strain>
    </source>
</reference>
<reference evidence="7" key="4">
    <citation type="journal article" date="2011" name="Cell. Mol. Life Sci.">
        <title>Cooperative interactions between odorant-binding proteins of Anopheles gambiae.</title>
        <authorList>
            <person name="Qiao H."/>
            <person name="He X."/>
            <person name="Schymura D."/>
            <person name="Ban L."/>
            <person name="Field L."/>
            <person name="Dani F.R."/>
            <person name="Michelucci E."/>
            <person name="Caputo B."/>
            <person name="della Torre A."/>
            <person name="Iatrou K."/>
            <person name="Zhou J.J."/>
            <person name="Krieger J."/>
            <person name="Pelosi P."/>
        </authorList>
    </citation>
    <scope>FUNCTION</scope>
    <scope>GLYCOSYLATION</scope>
    <scope>TISSUE SPECIFICITY</scope>
</reference>
<reference evidence="11" key="5">
    <citation type="journal article" date="2011" name="Biochem. J.">
        <title>Crystal structure of a novel type of odorant-binding protein from Anopheles gambiae, belonging to the C-plus class.</title>
        <authorList>
            <person name="Lagarde A."/>
            <person name="Spinelli S."/>
            <person name="Qiao H."/>
            <person name="Tegoni M."/>
            <person name="Pelosi P."/>
            <person name="Cambillau C."/>
        </authorList>
    </citation>
    <scope>X-RAY CRYSTALLOGRAPHY (1.80 ANGSTROMS) OF 58-228</scope>
    <scope>DISULFIDE BONDS</scope>
</reference>
<evidence type="ECO:0000255" key="1">
    <source>
        <dbReference type="PROSITE-ProRule" id="PRU00498"/>
    </source>
</evidence>
<evidence type="ECO:0000269" key="2">
    <source>
    </source>
</evidence>
<evidence type="ECO:0000269" key="3">
    <source>
    </source>
</evidence>
<evidence type="ECO:0000303" key="4">
    <source>
    </source>
</evidence>
<evidence type="ECO:0000303" key="5">
    <source>
    </source>
</evidence>
<evidence type="ECO:0000303" key="6">
    <source>
    </source>
</evidence>
<evidence type="ECO:0000305" key="7"/>
<evidence type="ECO:0000312" key="8">
    <source>
        <dbReference type="EMBL" id="CAF01997.1"/>
    </source>
</evidence>
<evidence type="ECO:0000312" key="9">
    <source>
        <dbReference type="EMBL" id="EAA45425.3"/>
    </source>
</evidence>
<evidence type="ECO:0000312" key="10">
    <source>
        <dbReference type="Proteomes" id="UP000007062"/>
    </source>
</evidence>
<evidence type="ECO:0007744" key="11">
    <source>
        <dbReference type="PDB" id="3PM2"/>
    </source>
</evidence>
<evidence type="ECO:0007829" key="12">
    <source>
        <dbReference type="PDB" id="3PM2"/>
    </source>
</evidence>
<feature type="chain" id="PRO_0000461111" description="Odorant-binding protein 47">
    <location>
        <begin position="1"/>
        <end position="228"/>
    </location>
</feature>
<feature type="glycosylation site" description="N-linked (GlcNAc...) asparagine" evidence="1">
    <location>
        <position position="117"/>
    </location>
</feature>
<feature type="disulfide bond" evidence="3 11">
    <location>
        <begin position="60"/>
        <end position="225"/>
    </location>
</feature>
<feature type="disulfide bond" evidence="3 11">
    <location>
        <begin position="73"/>
        <end position="215"/>
    </location>
</feature>
<feature type="disulfide bond" evidence="3 11">
    <location>
        <begin position="74"/>
        <end position="204"/>
    </location>
</feature>
<feature type="disulfide bond" evidence="3 11">
    <location>
        <begin position="88"/>
        <end position="114"/>
    </location>
</feature>
<feature type="disulfide bond" evidence="3 11">
    <location>
        <begin position="110"/>
        <end position="185"/>
    </location>
</feature>
<feature type="disulfide bond" evidence="3 11">
    <location>
        <begin position="158"/>
        <end position="195"/>
    </location>
</feature>
<feature type="helix" evidence="12">
    <location>
        <begin position="59"/>
        <end position="62"/>
    </location>
</feature>
<feature type="helix" evidence="12">
    <location>
        <begin position="70"/>
        <end position="72"/>
    </location>
</feature>
<feature type="helix" evidence="12">
    <location>
        <begin position="82"/>
        <end position="99"/>
    </location>
</feature>
<feature type="helix" evidence="12">
    <location>
        <begin position="110"/>
        <end position="118"/>
    </location>
</feature>
<feature type="helix" evidence="12">
    <location>
        <begin position="129"/>
        <end position="140"/>
    </location>
</feature>
<feature type="helix" evidence="12">
    <location>
        <begin position="147"/>
        <end position="164"/>
    </location>
</feature>
<feature type="helix" evidence="12">
    <location>
        <begin position="166"/>
        <end position="173"/>
    </location>
</feature>
<feature type="helix" evidence="12">
    <location>
        <begin position="188"/>
        <end position="202"/>
    </location>
</feature>
<feature type="helix" evidence="12">
    <location>
        <begin position="206"/>
        <end position="208"/>
    </location>
</feature>
<feature type="helix" evidence="12">
    <location>
        <begin position="213"/>
        <end position="222"/>
    </location>
</feature>
<proteinExistence type="evidence at protein level"/>
<name>OBP47_ANOGA</name>
<keyword id="KW-0002">3D-structure</keyword>
<keyword id="KW-1015">Disulfide bond</keyword>
<keyword id="KW-0325">Glycoprotein</keyword>
<keyword id="KW-0552">Olfaction</keyword>
<keyword id="KW-1185">Reference proteome</keyword>
<keyword id="KW-0964">Secreted</keyword>
<keyword id="KW-0716">Sensory transduction</keyword>
<keyword id="KW-0813">Transport</keyword>
<sequence>MKHLKAFDEAQNDIKAVQKRLSTSSTILSGIQKNMAHLNLLQIGVLSLIAVGSVFAGNPCLKGPPVPKNAAECCVTPFLVEPSAFMTCHSKWIGQTKRQMAMEGIPRGCCVAECVMNSTSLYSNGKIDREALTKLYLASTKSMAPEWNKITLDAIDGCFKMADTIKDEIEAGAKLTPAFEGEQICHPISGTILACMGMTLFAECPAKLFTVNDDCNKLKSYHSKCPFL</sequence>
<organism evidence="10">
    <name type="scientific">Anopheles gambiae</name>
    <name type="common">African malaria mosquito</name>
    <dbReference type="NCBI Taxonomy" id="7165"/>
    <lineage>
        <taxon>Eukaryota</taxon>
        <taxon>Metazoa</taxon>
        <taxon>Ecdysozoa</taxon>
        <taxon>Arthropoda</taxon>
        <taxon>Hexapoda</taxon>
        <taxon>Insecta</taxon>
        <taxon>Pterygota</taxon>
        <taxon>Neoptera</taxon>
        <taxon>Endopterygota</taxon>
        <taxon>Diptera</taxon>
        <taxon>Nematocera</taxon>
        <taxon>Culicoidea</taxon>
        <taxon>Culicidae</taxon>
        <taxon>Anophelinae</taxon>
        <taxon>Anopheles</taxon>
    </lineage>
</organism>